<protein>
    <recommendedName>
        <fullName evidence="13">Ribitol 5-phosphate transferase FKRP</fullName>
        <ecNumber evidence="10">2.7.8.-</ecNumber>
    </recommendedName>
    <alternativeName>
        <fullName evidence="12">Fukutin-related protein</fullName>
        <ecNumber evidence="2">2.4.2.-</ecNumber>
    </alternativeName>
    <alternativeName>
        <fullName evidence="2">Ribitol-5-phosphate transferase</fullName>
    </alternativeName>
</protein>
<organism>
    <name type="scientific">Mus musculus</name>
    <name type="common">Mouse</name>
    <dbReference type="NCBI Taxonomy" id="10090"/>
    <lineage>
        <taxon>Eukaryota</taxon>
        <taxon>Metazoa</taxon>
        <taxon>Chordata</taxon>
        <taxon>Craniata</taxon>
        <taxon>Vertebrata</taxon>
        <taxon>Euteleostomi</taxon>
        <taxon>Mammalia</taxon>
        <taxon>Eutheria</taxon>
        <taxon>Euarchontoglires</taxon>
        <taxon>Glires</taxon>
        <taxon>Rodentia</taxon>
        <taxon>Myomorpha</taxon>
        <taxon>Muroidea</taxon>
        <taxon>Muridae</taxon>
        <taxon>Murinae</taxon>
        <taxon>Mus</taxon>
        <taxon>Mus</taxon>
    </lineage>
</organism>
<name>FKRP_MOUSE</name>
<proteinExistence type="evidence at protein level"/>
<reference key="1">
    <citation type="journal article" date="2002" name="Hum. Mol. Genet.">
        <title>Functional requirements for fukutin-related protein in the Golgi apparatus.</title>
        <authorList>
            <person name="Esapa C.T."/>
            <person name="Benson M.A."/>
            <person name="Schroeder J.E."/>
            <person name="Martin-Rendon E."/>
            <person name="Brockington M."/>
            <person name="Brown S.C."/>
            <person name="Muntoni F."/>
            <person name="Kroeger S."/>
            <person name="Blake D.J."/>
        </authorList>
    </citation>
    <scope>NUCLEOTIDE SEQUENCE [MRNA]</scope>
    <scope>SUBCELLULAR LOCATION</scope>
    <scope>TISSUE SPECIFICITY</scope>
    <scope>MUTAGENESIS OF 2-ARG--ARG-5; 362-ASP--ASP-364 AND PRO-448</scope>
    <scope>POSSIBLE FUNCTION</scope>
    <source>
        <strain>C57BL/6J</strain>
        <tissue>Brain</tissue>
    </source>
</reference>
<reference key="2">
    <citation type="journal article" date="2004" name="Genome Res.">
        <title>The status, quality, and expansion of the NIH full-length cDNA project: the Mammalian Gene Collection (MGC).</title>
        <authorList>
            <consortium name="The MGC Project Team"/>
        </authorList>
    </citation>
    <scope>NUCLEOTIDE SEQUENCE [LARGE SCALE MRNA]</scope>
    <source>
        <strain>C57BL/6J</strain>
        <tissue>Brain cortex</tissue>
    </source>
</reference>
<reference key="3">
    <citation type="journal article" date="2005" name="Science">
        <title>The transcriptional landscape of the mammalian genome.</title>
        <authorList>
            <person name="Carninci P."/>
            <person name="Kasukawa T."/>
            <person name="Katayama S."/>
            <person name="Gough J."/>
            <person name="Frith M.C."/>
            <person name="Maeda N."/>
            <person name="Oyama R."/>
            <person name="Ravasi T."/>
            <person name="Lenhard B."/>
            <person name="Wells C."/>
            <person name="Kodzius R."/>
            <person name="Shimokawa K."/>
            <person name="Bajic V.B."/>
            <person name="Brenner S.E."/>
            <person name="Batalov S."/>
            <person name="Forrest A.R."/>
            <person name="Zavolan M."/>
            <person name="Davis M.J."/>
            <person name="Wilming L.G."/>
            <person name="Aidinis V."/>
            <person name="Allen J.E."/>
            <person name="Ambesi-Impiombato A."/>
            <person name="Apweiler R."/>
            <person name="Aturaliya R.N."/>
            <person name="Bailey T.L."/>
            <person name="Bansal M."/>
            <person name="Baxter L."/>
            <person name="Beisel K.W."/>
            <person name="Bersano T."/>
            <person name="Bono H."/>
            <person name="Chalk A.M."/>
            <person name="Chiu K.P."/>
            <person name="Choudhary V."/>
            <person name="Christoffels A."/>
            <person name="Clutterbuck D.R."/>
            <person name="Crowe M.L."/>
            <person name="Dalla E."/>
            <person name="Dalrymple B.P."/>
            <person name="de Bono B."/>
            <person name="Della Gatta G."/>
            <person name="di Bernardo D."/>
            <person name="Down T."/>
            <person name="Engstrom P."/>
            <person name="Fagiolini M."/>
            <person name="Faulkner G."/>
            <person name="Fletcher C.F."/>
            <person name="Fukushima T."/>
            <person name="Furuno M."/>
            <person name="Futaki S."/>
            <person name="Gariboldi M."/>
            <person name="Georgii-Hemming P."/>
            <person name="Gingeras T.R."/>
            <person name="Gojobori T."/>
            <person name="Green R.E."/>
            <person name="Gustincich S."/>
            <person name="Harbers M."/>
            <person name="Hayashi Y."/>
            <person name="Hensch T.K."/>
            <person name="Hirokawa N."/>
            <person name="Hill D."/>
            <person name="Huminiecki L."/>
            <person name="Iacono M."/>
            <person name="Ikeo K."/>
            <person name="Iwama A."/>
            <person name="Ishikawa T."/>
            <person name="Jakt M."/>
            <person name="Kanapin A."/>
            <person name="Katoh M."/>
            <person name="Kawasawa Y."/>
            <person name="Kelso J."/>
            <person name="Kitamura H."/>
            <person name="Kitano H."/>
            <person name="Kollias G."/>
            <person name="Krishnan S.P."/>
            <person name="Kruger A."/>
            <person name="Kummerfeld S.K."/>
            <person name="Kurochkin I.V."/>
            <person name="Lareau L.F."/>
            <person name="Lazarevic D."/>
            <person name="Lipovich L."/>
            <person name="Liu J."/>
            <person name="Liuni S."/>
            <person name="McWilliam S."/>
            <person name="Madan Babu M."/>
            <person name="Madera M."/>
            <person name="Marchionni L."/>
            <person name="Matsuda H."/>
            <person name="Matsuzawa S."/>
            <person name="Miki H."/>
            <person name="Mignone F."/>
            <person name="Miyake S."/>
            <person name="Morris K."/>
            <person name="Mottagui-Tabar S."/>
            <person name="Mulder N."/>
            <person name="Nakano N."/>
            <person name="Nakauchi H."/>
            <person name="Ng P."/>
            <person name="Nilsson R."/>
            <person name="Nishiguchi S."/>
            <person name="Nishikawa S."/>
            <person name="Nori F."/>
            <person name="Ohara O."/>
            <person name="Okazaki Y."/>
            <person name="Orlando V."/>
            <person name="Pang K.C."/>
            <person name="Pavan W.J."/>
            <person name="Pavesi G."/>
            <person name="Pesole G."/>
            <person name="Petrovsky N."/>
            <person name="Piazza S."/>
            <person name="Reed J."/>
            <person name="Reid J.F."/>
            <person name="Ring B.Z."/>
            <person name="Ringwald M."/>
            <person name="Rost B."/>
            <person name="Ruan Y."/>
            <person name="Salzberg S.L."/>
            <person name="Sandelin A."/>
            <person name="Schneider C."/>
            <person name="Schoenbach C."/>
            <person name="Sekiguchi K."/>
            <person name="Semple C.A."/>
            <person name="Seno S."/>
            <person name="Sessa L."/>
            <person name="Sheng Y."/>
            <person name="Shibata Y."/>
            <person name="Shimada H."/>
            <person name="Shimada K."/>
            <person name="Silva D."/>
            <person name="Sinclair B."/>
            <person name="Sperling S."/>
            <person name="Stupka E."/>
            <person name="Sugiura K."/>
            <person name="Sultana R."/>
            <person name="Takenaka Y."/>
            <person name="Taki K."/>
            <person name="Tammoja K."/>
            <person name="Tan S.L."/>
            <person name="Tang S."/>
            <person name="Taylor M.S."/>
            <person name="Tegner J."/>
            <person name="Teichmann S.A."/>
            <person name="Ueda H.R."/>
            <person name="van Nimwegen E."/>
            <person name="Verardo R."/>
            <person name="Wei C.L."/>
            <person name="Yagi K."/>
            <person name="Yamanishi H."/>
            <person name="Zabarovsky E."/>
            <person name="Zhu S."/>
            <person name="Zimmer A."/>
            <person name="Hide W."/>
            <person name="Bult C."/>
            <person name="Grimmond S.M."/>
            <person name="Teasdale R.D."/>
            <person name="Liu E.T."/>
            <person name="Brusic V."/>
            <person name="Quackenbush J."/>
            <person name="Wahlestedt C."/>
            <person name="Mattick J.S."/>
            <person name="Hume D.A."/>
            <person name="Kai C."/>
            <person name="Sasaki D."/>
            <person name="Tomaru Y."/>
            <person name="Fukuda S."/>
            <person name="Kanamori-Katayama M."/>
            <person name="Suzuki M."/>
            <person name="Aoki J."/>
            <person name="Arakawa T."/>
            <person name="Iida J."/>
            <person name="Imamura K."/>
            <person name="Itoh M."/>
            <person name="Kato T."/>
            <person name="Kawaji H."/>
            <person name="Kawagashira N."/>
            <person name="Kawashima T."/>
            <person name="Kojima M."/>
            <person name="Kondo S."/>
            <person name="Konno H."/>
            <person name="Nakano K."/>
            <person name="Ninomiya N."/>
            <person name="Nishio T."/>
            <person name="Okada M."/>
            <person name="Plessy C."/>
            <person name="Shibata K."/>
            <person name="Shiraki T."/>
            <person name="Suzuki S."/>
            <person name="Tagami M."/>
            <person name="Waki K."/>
            <person name="Watahiki A."/>
            <person name="Okamura-Oho Y."/>
            <person name="Suzuki H."/>
            <person name="Kawai J."/>
            <person name="Hayashizaki Y."/>
        </authorList>
    </citation>
    <scope>NUCLEOTIDE SEQUENCE [LARGE SCALE MRNA] OF 63-494</scope>
    <source>
        <strain>C57BL/6J</strain>
        <tissue>Brain cortex</tissue>
    </source>
</reference>
<reference key="4">
    <citation type="journal article" date="2007" name="J. Biol. Chem.">
        <title>Fukutin-related protein associates with the sarcolemmal dystrophin-glycoprotein complex.</title>
        <authorList>
            <person name="Beedle A.M."/>
            <person name="Nienaber P.M."/>
            <person name="Campbell K.P."/>
        </authorList>
    </citation>
    <scope>SUBCELLULAR LOCATION</scope>
    <scope>INTERACTION WITH DGC COMPLEX</scope>
</reference>
<reference key="5">
    <citation type="journal article" date="2007" name="Muscle Nerve">
        <title>Fukutin-related protein localizes to the Golgi apparatus and mutations lead to mislocalization in muscle in vivo.</title>
        <authorList>
            <person name="Keramaris-Vrantsis E."/>
            <person name="Lu P.J."/>
            <person name="Doran T."/>
            <person name="Zillmer A."/>
            <person name="Ashar J."/>
            <person name="Esapa C.T."/>
            <person name="Benson M.A."/>
            <person name="Blake D.J."/>
            <person name="Rosenfeld J."/>
            <person name="Lu Q.L."/>
        </authorList>
    </citation>
    <scope>SUBCELLULAR LOCATION</scope>
    <scope>MUTAGENESIS OF LEU-276; VAL-405 AND PRO-448</scope>
</reference>
<reference key="6">
    <citation type="journal article" date="2010" name="Biochim. Biophys. Acta">
        <title>Mutations alter secretion of fukutin-related protein.</title>
        <authorList>
            <person name="Lu P.J."/>
            <person name="Zillmer A."/>
            <person name="Wu X."/>
            <person name="Lochmuller H."/>
            <person name="Vachris J."/>
            <person name="Blake D."/>
            <person name="Chan Y.M."/>
            <person name="Lu Q.L."/>
        </authorList>
    </citation>
    <scope>SUBCELLULAR LOCATION</scope>
    <scope>MUTAGENESIS OF LEU-276; CYS-318 AND PRO-448</scope>
</reference>
<reference key="7">
    <citation type="journal article" date="2010" name="Hum. Mol. Genet.">
        <title>Fukutin-related protein is essential for mouse muscle, brain and eye development and mutation recapitulates the wide clinical spectrums of dystroglycanopathies.</title>
        <authorList>
            <person name="Chan Y.M."/>
            <person name="Keramaris-Vrantsis E."/>
            <person name="Lidov H.G."/>
            <person name="Norton J.H."/>
            <person name="Zinchenko N."/>
            <person name="Gruber H.E."/>
            <person name="Thresher R."/>
            <person name="Blake D.J."/>
            <person name="Ashar J."/>
            <person name="Rosenfeld J."/>
            <person name="Lu Q.L."/>
        </authorList>
    </citation>
    <scope>DISRUPTION PHENOTYPE</scope>
    <scope>MUTAGENESIS OF PRO-448</scope>
</reference>
<reference key="8">
    <citation type="journal article" date="2013" name="Hum. Genet.">
        <title>Mouse models of fukutin-related protein mutations show a wide range of disease phenotypes.</title>
        <authorList>
            <person name="Blaeser A."/>
            <person name="Keramaris E."/>
            <person name="Chan Y.M."/>
            <person name="Sparks S."/>
            <person name="Cowley D."/>
            <person name="Xiao X."/>
            <person name="Lu Q.L."/>
        </authorList>
    </citation>
    <scope>MUTAGENESIS OF LEU-276 AND PRO-448</scope>
</reference>
<reference key="9">
    <citation type="journal article" date="2016" name="Cell Rep.">
        <title>Identification of a Post-translational Modification with Ribitol-Phosphate and Its Defect in Muscular Dystrophy.</title>
        <authorList>
            <person name="Kanagawa M."/>
            <person name="Kobayashi K."/>
            <person name="Tajiri M."/>
            <person name="Manya H."/>
            <person name="Kuga A."/>
            <person name="Yamaguchi Y."/>
            <person name="Akasaka-Manya K."/>
            <person name="Furukawa J.I."/>
            <person name="Mizuno M."/>
            <person name="Kawakami H."/>
            <person name="Shinohara Y."/>
            <person name="Wada Y."/>
            <person name="Endo T."/>
            <person name="Toda T."/>
        </authorList>
    </citation>
    <scope>FUNCTION</scope>
    <scope>CATALYTIC ACTIVITY</scope>
    <scope>PATHWAY</scope>
    <scope>SUBCELLULAR LOCATION</scope>
</reference>
<reference key="10">
    <citation type="journal article" date="2018" name="Mol. Vis.">
        <title>Expression in retinal neurons of fukutin and FKRP, the protein products of two dystroglycanopathy-causative genes.</title>
        <authorList>
            <person name="Haro C."/>
            <person name="Uribe M.L."/>
            <person name="Quereda C."/>
            <person name="Cruces J."/>
            <person name="Martin-Nieto J."/>
        </authorList>
    </citation>
    <scope>SUBCELLULAR LOCATION</scope>
    <scope>TISSUE SPECIFICITY</scope>
</reference>
<dbReference type="EC" id="2.7.8.-" evidence="10"/>
<dbReference type="EC" id="2.4.2.-" evidence="2"/>
<dbReference type="EMBL" id="AJ511806">
    <property type="protein sequence ID" value="CAD54301.1"/>
    <property type="molecule type" value="mRNA"/>
</dbReference>
<dbReference type="EMBL" id="BC053072">
    <property type="protein sequence ID" value="AAH53072.1"/>
    <property type="molecule type" value="mRNA"/>
</dbReference>
<dbReference type="EMBL" id="AK080624">
    <property type="protein sequence ID" value="BAC37963.1"/>
    <property type="status" value="ALT_INIT"/>
    <property type="molecule type" value="mRNA"/>
</dbReference>
<dbReference type="CCDS" id="CCDS20853.1"/>
<dbReference type="RefSeq" id="NP_001345775.1">
    <property type="nucleotide sequence ID" value="NM_001358846.1"/>
</dbReference>
<dbReference type="RefSeq" id="NP_775606.1">
    <property type="nucleotide sequence ID" value="NM_173430.2"/>
</dbReference>
<dbReference type="RefSeq" id="XP_006539991.1">
    <property type="nucleotide sequence ID" value="XM_006539928.3"/>
</dbReference>
<dbReference type="RefSeq" id="XP_006539992.1">
    <property type="nucleotide sequence ID" value="XM_006539929.5"/>
</dbReference>
<dbReference type="RefSeq" id="XP_006539993.1">
    <property type="nucleotide sequence ID" value="XM_006539930.5"/>
</dbReference>
<dbReference type="RefSeq" id="XP_011248864.1">
    <property type="nucleotide sequence ID" value="XM_011250562.3"/>
</dbReference>
<dbReference type="SMR" id="Q8CG64"/>
<dbReference type="BioGRID" id="232568">
    <property type="interactions" value="1"/>
</dbReference>
<dbReference type="FunCoup" id="Q8CG64">
    <property type="interactions" value="656"/>
</dbReference>
<dbReference type="STRING" id="10090.ENSMUSP00000059091"/>
<dbReference type="GlyCosmos" id="Q8CG64">
    <property type="glycosylation" value="2 sites, No reported glycans"/>
</dbReference>
<dbReference type="GlyGen" id="Q8CG64">
    <property type="glycosylation" value="2 sites, 2 N-linked glycans (2 sites)"/>
</dbReference>
<dbReference type="PhosphoSitePlus" id="Q8CG64"/>
<dbReference type="PaxDb" id="10090-ENSMUSP00000059091"/>
<dbReference type="ProteomicsDB" id="271771"/>
<dbReference type="Pumba" id="Q8CG64"/>
<dbReference type="Antibodypedia" id="57230">
    <property type="antibodies" value="240 antibodies from 26 providers"/>
</dbReference>
<dbReference type="DNASU" id="243853"/>
<dbReference type="Ensembl" id="ENSMUST00000061390.9">
    <property type="protein sequence ID" value="ENSMUSP00000059091.8"/>
    <property type="gene ID" value="ENSMUSG00000048920.9"/>
</dbReference>
<dbReference type="GeneID" id="243853"/>
<dbReference type="KEGG" id="mmu:243853"/>
<dbReference type="UCSC" id="uc009fic.1">
    <property type="organism name" value="mouse"/>
</dbReference>
<dbReference type="AGR" id="MGI:2447586"/>
<dbReference type="CTD" id="79147"/>
<dbReference type="MGI" id="MGI:2447586">
    <property type="gene designation" value="Fkrp"/>
</dbReference>
<dbReference type="VEuPathDB" id="HostDB:ENSMUSG00000048920"/>
<dbReference type="eggNOG" id="ENOG502QV4Y">
    <property type="taxonomic scope" value="Eukaryota"/>
</dbReference>
<dbReference type="GeneTree" id="ENSGT00390000017583"/>
<dbReference type="HOGENOM" id="CLU_041755_1_0_1"/>
<dbReference type="InParanoid" id="Q8CG64"/>
<dbReference type="OMA" id="KEWTATY"/>
<dbReference type="OrthoDB" id="444255at2759"/>
<dbReference type="PhylomeDB" id="Q8CG64"/>
<dbReference type="TreeFam" id="TF324064"/>
<dbReference type="UniPathway" id="UPA00378"/>
<dbReference type="BioGRID-ORCS" id="243853">
    <property type="hits" value="5 hits in 78 CRISPR screens"/>
</dbReference>
<dbReference type="ChiTaRS" id="Fkrp">
    <property type="organism name" value="mouse"/>
</dbReference>
<dbReference type="PRO" id="PR:Q8CG64"/>
<dbReference type="Proteomes" id="UP000000589">
    <property type="component" value="Chromosome 7"/>
</dbReference>
<dbReference type="RNAct" id="Q8CG64">
    <property type="molecule type" value="protein"/>
</dbReference>
<dbReference type="Bgee" id="ENSMUSG00000048920">
    <property type="expression patterns" value="Expressed in knee joint and 218 other cell types or tissues"/>
</dbReference>
<dbReference type="ExpressionAtlas" id="Q8CG64">
    <property type="expression patterns" value="baseline and differential"/>
</dbReference>
<dbReference type="GO" id="GO:0005829">
    <property type="term" value="C:cytosol"/>
    <property type="evidence" value="ECO:0007669"/>
    <property type="project" value="Ensembl"/>
</dbReference>
<dbReference type="GO" id="GO:0005615">
    <property type="term" value="C:extracellular space"/>
    <property type="evidence" value="ECO:0000314"/>
    <property type="project" value="UniProtKB"/>
</dbReference>
<dbReference type="GO" id="GO:0005794">
    <property type="term" value="C:Golgi apparatus"/>
    <property type="evidence" value="ECO:0000314"/>
    <property type="project" value="MGI"/>
</dbReference>
<dbReference type="GO" id="GO:0000139">
    <property type="term" value="C:Golgi membrane"/>
    <property type="evidence" value="ECO:0000314"/>
    <property type="project" value="UniProtKB"/>
</dbReference>
<dbReference type="GO" id="GO:0005654">
    <property type="term" value="C:nucleoplasm"/>
    <property type="evidence" value="ECO:0007669"/>
    <property type="project" value="Ensembl"/>
</dbReference>
<dbReference type="GO" id="GO:0005791">
    <property type="term" value="C:rough endoplasmic reticulum"/>
    <property type="evidence" value="ECO:0007669"/>
    <property type="project" value="UniProtKB-SubCell"/>
</dbReference>
<dbReference type="GO" id="GO:0042383">
    <property type="term" value="C:sarcolemma"/>
    <property type="evidence" value="ECO:0000314"/>
    <property type="project" value="UniProtKB"/>
</dbReference>
<dbReference type="GO" id="GO:0098723">
    <property type="term" value="C:skeletal muscle myofibril"/>
    <property type="evidence" value="ECO:0000314"/>
    <property type="project" value="MGI"/>
</dbReference>
<dbReference type="GO" id="GO:0002162">
    <property type="term" value="F:dystroglycan binding"/>
    <property type="evidence" value="ECO:0000314"/>
    <property type="project" value="UniProtKB"/>
</dbReference>
<dbReference type="GO" id="GO:0042802">
    <property type="term" value="F:identical protein binding"/>
    <property type="evidence" value="ECO:0007669"/>
    <property type="project" value="Ensembl"/>
</dbReference>
<dbReference type="GO" id="GO:0043236">
    <property type="term" value="F:laminin binding"/>
    <property type="evidence" value="ECO:0000314"/>
    <property type="project" value="MGI"/>
</dbReference>
<dbReference type="GO" id="GO:0046872">
    <property type="term" value="F:metal ion binding"/>
    <property type="evidence" value="ECO:0007669"/>
    <property type="project" value="UniProtKB-KW"/>
</dbReference>
<dbReference type="GO" id="GO:0016780">
    <property type="term" value="F:phosphotransferase activity, for other substituted phosphate groups"/>
    <property type="evidence" value="ECO:0000314"/>
    <property type="project" value="UniProtKB"/>
</dbReference>
<dbReference type="GO" id="GO:0007628">
    <property type="term" value="P:adult walking behavior"/>
    <property type="evidence" value="ECO:0000315"/>
    <property type="project" value="MGI"/>
</dbReference>
<dbReference type="GO" id="GO:0071711">
    <property type="term" value="P:basement membrane organization"/>
    <property type="evidence" value="ECO:0000315"/>
    <property type="project" value="MGI"/>
</dbReference>
<dbReference type="GO" id="GO:0030282">
    <property type="term" value="P:bone mineralization"/>
    <property type="evidence" value="ECO:0000315"/>
    <property type="project" value="MGI"/>
</dbReference>
<dbReference type="GO" id="GO:0007420">
    <property type="term" value="P:brain development"/>
    <property type="evidence" value="ECO:0000315"/>
    <property type="project" value="MGI"/>
</dbReference>
<dbReference type="GO" id="GO:0043010">
    <property type="term" value="P:camera-type eye development"/>
    <property type="evidence" value="ECO:0000315"/>
    <property type="project" value="MGI"/>
</dbReference>
<dbReference type="GO" id="GO:0007417">
    <property type="term" value="P:central nervous system development"/>
    <property type="evidence" value="ECO:0000315"/>
    <property type="project" value="MGI"/>
</dbReference>
<dbReference type="GO" id="GO:0061448">
    <property type="term" value="P:connective tissue development"/>
    <property type="evidence" value="ECO:0000315"/>
    <property type="project" value="MGI"/>
</dbReference>
<dbReference type="GO" id="GO:0097709">
    <property type="term" value="P:connective tissue replacement"/>
    <property type="evidence" value="ECO:0000315"/>
    <property type="project" value="MGI"/>
</dbReference>
<dbReference type="GO" id="GO:0006600">
    <property type="term" value="P:creatine metabolic process"/>
    <property type="evidence" value="ECO:0000314"/>
    <property type="project" value="MGI"/>
</dbReference>
<dbReference type="GO" id="GO:0060539">
    <property type="term" value="P:diaphragm development"/>
    <property type="evidence" value="ECO:0000315"/>
    <property type="project" value="MGI"/>
</dbReference>
<dbReference type="GO" id="GO:0030198">
    <property type="term" value="P:extracellular matrix organization"/>
    <property type="evidence" value="ECO:0000314"/>
    <property type="project" value="MGI"/>
</dbReference>
<dbReference type="GO" id="GO:0001654">
    <property type="term" value="P:eye development"/>
    <property type="evidence" value="ECO:0000315"/>
    <property type="project" value="MGI"/>
</dbReference>
<dbReference type="GO" id="GO:0036058">
    <property type="term" value="P:filtration diaphragm assembly"/>
    <property type="evidence" value="ECO:0000315"/>
    <property type="project" value="MGI"/>
</dbReference>
<dbReference type="GO" id="GO:0010467">
    <property type="term" value="P:gene expression"/>
    <property type="evidence" value="ECO:0000315"/>
    <property type="project" value="MGI"/>
</dbReference>
<dbReference type="GO" id="GO:0010001">
    <property type="term" value="P:glial cell differentiation"/>
    <property type="evidence" value="ECO:0000315"/>
    <property type="project" value="MGI"/>
</dbReference>
<dbReference type="GO" id="GO:0006096">
    <property type="term" value="P:glycolytic process"/>
    <property type="evidence" value="ECO:0000314"/>
    <property type="project" value="MGI"/>
</dbReference>
<dbReference type="GO" id="GO:0009101">
    <property type="term" value="P:glycoprotein biosynthetic process"/>
    <property type="evidence" value="ECO:0000314"/>
    <property type="project" value="MGI"/>
</dbReference>
<dbReference type="GO" id="GO:0007507">
    <property type="term" value="P:heart development"/>
    <property type="evidence" value="ECO:0000315"/>
    <property type="project" value="MGI"/>
</dbReference>
<dbReference type="GO" id="GO:0003007">
    <property type="term" value="P:heart morphogenesis"/>
    <property type="evidence" value="ECO:0000315"/>
    <property type="project" value="MGI"/>
</dbReference>
<dbReference type="GO" id="GO:0001701">
    <property type="term" value="P:in utero embryonic development"/>
    <property type="evidence" value="ECO:0000315"/>
    <property type="project" value="MGI"/>
</dbReference>
<dbReference type="GO" id="GO:0006954">
    <property type="term" value="P:inflammatory response"/>
    <property type="evidence" value="ECO:0000315"/>
    <property type="project" value="MGI"/>
</dbReference>
<dbReference type="GO" id="GO:0006629">
    <property type="term" value="P:lipid metabolic process"/>
    <property type="evidence" value="ECO:0000314"/>
    <property type="project" value="MGI"/>
</dbReference>
<dbReference type="GO" id="GO:0051674">
    <property type="term" value="P:localization of cell"/>
    <property type="evidence" value="ECO:0000315"/>
    <property type="project" value="MGI"/>
</dbReference>
<dbReference type="GO" id="GO:0035437">
    <property type="term" value="P:maintenance of protein localization in endoplasmic reticulum"/>
    <property type="evidence" value="ECO:0000315"/>
    <property type="project" value="MGI"/>
</dbReference>
<dbReference type="GO" id="GO:0042692">
    <property type="term" value="P:muscle cell differentiation"/>
    <property type="evidence" value="ECO:0000315"/>
    <property type="project" value="MGI"/>
</dbReference>
<dbReference type="GO" id="GO:0006936">
    <property type="term" value="P:muscle contraction"/>
    <property type="evidence" value="ECO:0000315"/>
    <property type="project" value="MGI"/>
</dbReference>
<dbReference type="GO" id="GO:0061061">
    <property type="term" value="P:muscle structure development"/>
    <property type="evidence" value="ECO:0000315"/>
    <property type="project" value="MGI"/>
</dbReference>
<dbReference type="GO" id="GO:0050905">
    <property type="term" value="P:neuromuscular process"/>
    <property type="evidence" value="ECO:0000314"/>
    <property type="project" value="MGI"/>
</dbReference>
<dbReference type="GO" id="GO:0001764">
    <property type="term" value="P:neuron migration"/>
    <property type="evidence" value="ECO:0000315"/>
    <property type="project" value="MGI"/>
</dbReference>
<dbReference type="GO" id="GO:0072592">
    <property type="term" value="P:oxygen metabolic process"/>
    <property type="evidence" value="ECO:0000315"/>
    <property type="project" value="MGI"/>
</dbReference>
<dbReference type="GO" id="GO:0019519">
    <property type="term" value="P:pentitol metabolic process"/>
    <property type="evidence" value="ECO:0000314"/>
    <property type="project" value="MGI"/>
</dbReference>
<dbReference type="GO" id="GO:0019321">
    <property type="term" value="P:pentose metabolic process"/>
    <property type="evidence" value="ECO:0000314"/>
    <property type="project" value="MGI"/>
</dbReference>
<dbReference type="GO" id="GO:0043491">
    <property type="term" value="P:phosphatidylinositol 3-kinase/protein kinase B signal transduction"/>
    <property type="evidence" value="ECO:0000315"/>
    <property type="project" value="MGI"/>
</dbReference>
<dbReference type="GO" id="GO:0006486">
    <property type="term" value="P:protein glycosylation"/>
    <property type="evidence" value="ECO:0000314"/>
    <property type="project" value="MGI"/>
</dbReference>
<dbReference type="GO" id="GO:0017038">
    <property type="term" value="P:protein import"/>
    <property type="evidence" value="ECO:0000315"/>
    <property type="project" value="MGI"/>
</dbReference>
<dbReference type="GO" id="GO:0008104">
    <property type="term" value="P:protein localization"/>
    <property type="evidence" value="ECO:0000315"/>
    <property type="project" value="MGI"/>
</dbReference>
<dbReference type="GO" id="GO:0036211">
    <property type="term" value="P:protein modification process"/>
    <property type="evidence" value="ECO:0000315"/>
    <property type="project" value="MGI"/>
</dbReference>
<dbReference type="GO" id="GO:0035269">
    <property type="term" value="P:protein O-linked mannosylation"/>
    <property type="evidence" value="ECO:0000315"/>
    <property type="project" value="MGI"/>
</dbReference>
<dbReference type="GO" id="GO:0016485">
    <property type="term" value="P:protein processing"/>
    <property type="evidence" value="ECO:0000314"/>
    <property type="project" value="MGI"/>
</dbReference>
<dbReference type="GO" id="GO:0051262">
    <property type="term" value="P:protein tetramerization"/>
    <property type="evidence" value="ECO:0007669"/>
    <property type="project" value="Ensembl"/>
</dbReference>
<dbReference type="GO" id="GO:0038026">
    <property type="term" value="P:reelin-mediated signaling pathway"/>
    <property type="evidence" value="ECO:0000315"/>
    <property type="project" value="MGI"/>
</dbReference>
<dbReference type="GO" id="GO:0003016">
    <property type="term" value="P:respiratory system process"/>
    <property type="evidence" value="ECO:0000315"/>
    <property type="project" value="MGI"/>
</dbReference>
<dbReference type="GO" id="GO:0014823">
    <property type="term" value="P:response to activity"/>
    <property type="evidence" value="ECO:0000315"/>
    <property type="project" value="MGI"/>
</dbReference>
<dbReference type="GO" id="GO:0097305">
    <property type="term" value="P:response to alcohol"/>
    <property type="evidence" value="ECO:0000315"/>
    <property type="project" value="MGI"/>
</dbReference>
<dbReference type="GO" id="GO:0051384">
    <property type="term" value="P:response to glucocorticoid"/>
    <property type="evidence" value="ECO:0000315"/>
    <property type="project" value="MGI"/>
</dbReference>
<dbReference type="GO" id="GO:0009410">
    <property type="term" value="P:response to xenobiotic stimulus"/>
    <property type="evidence" value="ECO:0000315"/>
    <property type="project" value="MGI"/>
</dbReference>
<dbReference type="GO" id="GO:0098528">
    <property type="term" value="P:skeletal muscle fiber differentiation"/>
    <property type="evidence" value="ECO:0000315"/>
    <property type="project" value="MGI"/>
</dbReference>
<dbReference type="GO" id="GO:0060538">
    <property type="term" value="P:skeletal muscle organ development"/>
    <property type="evidence" value="ECO:0000315"/>
    <property type="project" value="MGI"/>
</dbReference>
<dbReference type="GO" id="GO:0007519">
    <property type="term" value="P:skeletal muscle tissue development"/>
    <property type="evidence" value="ECO:0000315"/>
    <property type="project" value="MGI"/>
</dbReference>
<dbReference type="GO" id="GO:0043403">
    <property type="term" value="P:skeletal muscle tissue regeneration"/>
    <property type="evidence" value="ECO:0000315"/>
    <property type="project" value="MGI"/>
</dbReference>
<dbReference type="GO" id="GO:0051146">
    <property type="term" value="P:striated muscle cell differentiation"/>
    <property type="evidence" value="ECO:0000315"/>
    <property type="project" value="MGI"/>
</dbReference>
<dbReference type="InterPro" id="IPR055105">
    <property type="entry name" value="FKRP_N"/>
</dbReference>
<dbReference type="InterPro" id="IPR007074">
    <property type="entry name" value="LicD/FKTN/FKRP_NTP_transf"/>
</dbReference>
<dbReference type="InterPro" id="IPR052613">
    <property type="entry name" value="LicD_transferase"/>
</dbReference>
<dbReference type="PANTHER" id="PTHR13627">
    <property type="entry name" value="FUKUTIN RELATED PROTEIN"/>
    <property type="match status" value="1"/>
</dbReference>
<dbReference type="PANTHER" id="PTHR13627:SF31">
    <property type="entry name" value="RIBITOL 5-PHOSPHATE TRANSFERASE FKRP"/>
    <property type="match status" value="1"/>
</dbReference>
<dbReference type="Pfam" id="PF22921">
    <property type="entry name" value="FKRP_N"/>
    <property type="match status" value="1"/>
</dbReference>
<dbReference type="Pfam" id="PF04991">
    <property type="entry name" value="LicD"/>
    <property type="match status" value="1"/>
</dbReference>
<gene>
    <name evidence="14" type="primary">Fkrp</name>
</gene>
<comment type="function">
    <text evidence="10">Catalyzes the transfer of CDP-ribitol to ribitol 5-phosphate previously attached by FKTN/fukutin of to the phosphorylated O-mannosyl trisaccharide (N-acetylgalactosamine-beta-3-N-acetylglucosamine-beta-4-(phosphate-6-)mannose), a carbohydrate structure present in alpha-dystroglycan (DAG1) (PubMed:26923585). This constitutes the second step in the formation of the ribose 5-phosphate tandem repeat which links the phosphorylated O-mannosyl trisaccharide to the ligand binding moiety composed of repeats of 3-xylosyl-alpha-1,3-glucuronic acid-beta-1 (PubMed:26923585).</text>
</comment>
<comment type="catalytic activity">
    <reaction evidence="10">
        <text>3-O-[Rib-ol-P-3-beta-D-GalNAc-(1-&gt;3)-beta-D-GlcNAc-(1-&gt;4)-(O-6-P-alpha-D-Man)]-Thr-[protein] + CDP-L-ribitol = 3-O-[Rib-ol-P-Rib-ol-P-3-beta-D-GalNAc-(1-&gt;3)-beta-D-GlcNAc-(1-&gt;4)-(O-6-P-alpha-D-Man)]-Thr-[protein] + CMP + H(+)</text>
        <dbReference type="Rhea" id="RHEA:39867"/>
        <dbReference type="Rhea" id="RHEA-COMP:15021"/>
        <dbReference type="Rhea" id="RHEA-COMP:17480"/>
        <dbReference type="ChEBI" id="CHEBI:15378"/>
        <dbReference type="ChEBI" id="CHEBI:57608"/>
        <dbReference type="ChEBI" id="CHEBI:60377"/>
        <dbReference type="ChEBI" id="CHEBI:142403"/>
        <dbReference type="ChEBI" id="CHEBI:177331"/>
    </reaction>
    <physiologicalReaction direction="left-to-right" evidence="10">
        <dbReference type="Rhea" id="RHEA:39868"/>
    </physiologicalReaction>
</comment>
<comment type="pathway">
    <text evidence="10">Protein modification; protein glycosylation.</text>
</comment>
<comment type="subunit">
    <text evidence="2 5">Homodimer; disulfide-linked (By similarity). Forms a complex composed of FKRP, FKTN/fukutin, and RXYLT1/TMEM5 (By similarity). Also exists as large multimeric protein complexes (By similarity). May interact with the dystrophin-glycoprotein complex (DGC) (PubMed:17452335).</text>
</comment>
<comment type="subcellular location">
    <subcellularLocation>
        <location evidence="4 6 10">Golgi apparatus membrane</location>
        <topology evidence="13">Single-pass type II membrane protein</topology>
    </subcellularLocation>
    <subcellularLocation>
        <location evidence="7">Secreted</location>
    </subcellularLocation>
    <subcellularLocation>
        <location evidence="5">Cell membrane</location>
        <location evidence="5">Sarcolemma</location>
    </subcellularLocation>
    <subcellularLocation>
        <location evidence="2">Rough endoplasmic reticulum</location>
    </subcellularLocation>
    <subcellularLocation>
        <location evidence="11">Cytoplasm</location>
    </subcellularLocation>
    <text evidence="2 4 5 6 7">The N-terminal hydrophobic domain is cleaved after translocation to the Golgi apparatus and the protein is secreted (PubMed:19900540). Localization at the cell membrane may require the presence of dystroglycan (PubMed:17452335). At the Golgi apparatus localizes to the middle-to-trans-cisternae (PubMed:12471058, PubMed:17554798). Detected in rough endoplasmic reticulum in myocytes (By similarity).</text>
</comment>
<comment type="tissue specificity">
    <text evidence="4 11">Expressed in the retina, specifically in the inner segments of the photoreceptors, the outer plexiform layers, inner nuclear layers, and ganglion cell layers (at protein level) (PubMed:29416295). Expressed at highest levels in brain, lung, heart, kidney and liver (PubMed:12471058).</text>
</comment>
<comment type="PTM">
    <text evidence="1">N-glycosylated.</text>
</comment>
<comment type="disruption phenotype">
    <text evidence="8">Embryonic lethality before 12.5 dpc.</text>
</comment>
<comment type="similarity">
    <text evidence="13">Belongs to the LicD transferase family.</text>
</comment>
<comment type="sequence caution" evidence="13">
    <conflict type="erroneous initiation">
        <sequence resource="EMBL-CDS" id="BAC37963"/>
    </conflict>
</comment>
<evidence type="ECO:0000250" key="1"/>
<evidence type="ECO:0000250" key="2">
    <source>
        <dbReference type="UniProtKB" id="Q9H9S5"/>
    </source>
</evidence>
<evidence type="ECO:0000255" key="3"/>
<evidence type="ECO:0000269" key="4">
    <source>
    </source>
</evidence>
<evidence type="ECO:0000269" key="5">
    <source>
    </source>
</evidence>
<evidence type="ECO:0000269" key="6">
    <source>
    </source>
</evidence>
<evidence type="ECO:0000269" key="7">
    <source>
    </source>
</evidence>
<evidence type="ECO:0000269" key="8">
    <source>
    </source>
</evidence>
<evidence type="ECO:0000269" key="9">
    <source>
    </source>
</evidence>
<evidence type="ECO:0000269" key="10">
    <source>
    </source>
</evidence>
<evidence type="ECO:0000269" key="11">
    <source>
    </source>
</evidence>
<evidence type="ECO:0000303" key="12">
    <source>
    </source>
</evidence>
<evidence type="ECO:0000305" key="13"/>
<evidence type="ECO:0000312" key="14">
    <source>
        <dbReference type="MGI" id="MGI:2447586"/>
    </source>
</evidence>
<accession>Q8CG64</accession>
<accession>Q8BJR3</accession>
<sequence length="494" mass="54852">MRLTRCWAALAAAIILNLLVFFYVSWLQHQPRNSRARGPRRTSAIGPRVTVLIREFEAFDNAVPELVDSFLQQDPAQPVVVAADTLPYPPLALPRIPNVRLALLQPALDRPAAASRPETYVATEFVALVPDGARAESPGHLERMVEALRGSSARLVAAPVATANPARCLALNVSLREWTARYDPAPSAPRCDALDGDAVLLMRSRDLFNLSVPLARPLATSLFLQTALRGWAVQLLDLTFAAARQPPLATAHARWKAEREGRSRRAALLRSLGIRLVSWEGGRLEWFGCSKESARCFGTVAGDTPAYLYEGRWTPPCCLRALRETARYVVGVLEAAGVRYWLEGGSLLGAARHGDIIPWDYDVDLGIYLEDVGNCEQLRGAEAGSVVDERGFVWEKAVEGDFFRVQYSENNHLHVDLWPFYPRNGVMTKDTWLDHRQDVEFPEHFLQPLVPLPFAGFMAQAPNNYRRFLELKFGPGVIENPEYPNPALLSLTGG</sequence>
<keyword id="KW-1003">Cell membrane</keyword>
<keyword id="KW-0963">Cytoplasm</keyword>
<keyword id="KW-1015">Disulfide bond</keyword>
<keyword id="KW-0256">Endoplasmic reticulum</keyword>
<keyword id="KW-0325">Glycoprotein</keyword>
<keyword id="KW-0333">Golgi apparatus</keyword>
<keyword id="KW-0460">Magnesium</keyword>
<keyword id="KW-0472">Membrane</keyword>
<keyword id="KW-0479">Metal-binding</keyword>
<keyword id="KW-1185">Reference proteome</keyword>
<keyword id="KW-0964">Secreted</keyword>
<keyword id="KW-0735">Signal-anchor</keyword>
<keyword id="KW-0808">Transferase</keyword>
<keyword id="KW-0812">Transmembrane</keyword>
<keyword id="KW-1133">Transmembrane helix</keyword>
<keyword id="KW-0862">Zinc</keyword>
<feature type="chain" id="PRO_0000204724" description="Ribitol 5-phosphate transferase FKRP">
    <location>
        <begin position="1"/>
        <end position="494"/>
    </location>
</feature>
<feature type="topological domain" description="Cytoplasmic" evidence="3">
    <location>
        <begin position="1"/>
        <end position="6"/>
    </location>
</feature>
<feature type="transmembrane region" description="Helical" evidence="3">
    <location>
        <begin position="7"/>
        <end position="29"/>
    </location>
</feature>
<feature type="topological domain" description="Lumenal" evidence="3">
    <location>
        <begin position="30"/>
        <end position="494"/>
    </location>
</feature>
<feature type="region of interest" description="Zinc finger loop" evidence="2">
    <location>
        <begin position="289"/>
        <end position="318"/>
    </location>
</feature>
<feature type="region of interest" description="CDP-L-ribitol" evidence="2">
    <location>
        <begin position="359"/>
        <end position="364"/>
    </location>
</feature>
<feature type="region of interest" description="CDP-L-ribitol" evidence="2">
    <location>
        <begin position="437"/>
        <end position="438"/>
    </location>
</feature>
<feature type="region of interest" description="CDP-L-ribitol" evidence="2">
    <location>
        <begin position="480"/>
        <end position="482"/>
    </location>
</feature>
<feature type="binding site" evidence="2">
    <location>
        <position position="289"/>
    </location>
    <ligand>
        <name>Zn(2+)</name>
        <dbReference type="ChEBI" id="CHEBI:29105"/>
    </ligand>
</feature>
<feature type="binding site" evidence="2">
    <location>
        <position position="296"/>
    </location>
    <ligand>
        <name>Zn(2+)</name>
        <dbReference type="ChEBI" id="CHEBI:29105"/>
    </ligand>
</feature>
<feature type="binding site" evidence="2">
    <location>
        <position position="317"/>
    </location>
    <ligand>
        <name>Zn(2+)</name>
        <dbReference type="ChEBI" id="CHEBI:29105"/>
    </ligand>
</feature>
<feature type="binding site" evidence="2">
    <location>
        <position position="318"/>
    </location>
    <ligand>
        <name>Zn(2+)</name>
        <dbReference type="ChEBI" id="CHEBI:29105"/>
    </ligand>
</feature>
<feature type="binding site" evidence="2">
    <location>
        <position position="345"/>
    </location>
    <ligand>
        <name>CDP-L-ribitol</name>
        <dbReference type="ChEBI" id="CHEBI:57608"/>
    </ligand>
</feature>
<feature type="binding site" evidence="2">
    <location>
        <position position="352"/>
    </location>
    <ligand>
        <name>CDP-L-ribitol</name>
        <dbReference type="ChEBI" id="CHEBI:57608"/>
    </ligand>
</feature>
<feature type="binding site" evidence="2">
    <location>
        <position position="360"/>
    </location>
    <ligand>
        <name>Mg(2+)</name>
        <dbReference type="ChEBI" id="CHEBI:18420"/>
    </ligand>
</feature>
<feature type="binding site" evidence="2">
    <location>
        <position position="362"/>
    </location>
    <ligand>
        <name>Mg(2+)</name>
        <dbReference type="ChEBI" id="CHEBI:18420"/>
    </ligand>
</feature>
<feature type="binding site" evidence="2">
    <location>
        <position position="364"/>
    </location>
    <ligand>
        <name>Mg(2+)</name>
        <dbReference type="ChEBI" id="CHEBI:18420"/>
    </ligand>
</feature>
<feature type="glycosylation site" description="N-linked (GlcNAc...) asparagine" evidence="3">
    <location>
        <position position="172"/>
    </location>
</feature>
<feature type="glycosylation site" description="N-linked (GlcNAc...) asparagine" evidence="3">
    <location>
        <position position="209"/>
    </location>
</feature>
<feature type="disulfide bond" description="Interchain">
    <location>
        <position position="6"/>
    </location>
</feature>
<feature type="disulfide bond" evidence="2">
    <location>
        <begin position="168"/>
        <end position="191"/>
    </location>
</feature>
<feature type="mutagenesis site" description="Localized to the perinuclear region but not retained in or targeted to the medial part of the Golgi apparatus." evidence="4">
    <original>RLTR</original>
    <variation>ELTE</variation>
    <location>
        <begin position="2"/>
        <end position="5"/>
    </location>
</feature>
<feature type="mutagenesis site" description="Reduced secretion to the medium; localizes mainly to the Golgi apparatus. Mild dystrophy with reduced alpha-dystroglycan glycosylation and no apparent brain defects." evidence="6 7 9">
    <original>L</original>
    <variation>I</variation>
    <location>
        <position position="276"/>
    </location>
</feature>
<feature type="mutagenesis site" description="Reduced secretion to the medium." evidence="7">
    <original>C</original>
    <variation>Y</variation>
    <location>
        <position position="318"/>
    </location>
</feature>
<feature type="mutagenesis site" description="Does not alter dystroglycan processing in vitro." evidence="4">
    <original>DVD</original>
    <variation>NNN</variation>
    <location>
        <begin position="362"/>
        <end position="364"/>
    </location>
</feature>
<feature type="mutagenesis site" description="Localizes mainly to the ER compartment." evidence="6">
    <original>V</original>
    <variation>L</variation>
    <location>
        <position position="405"/>
    </location>
</feature>
<feature type="mutagenesis site" description="Not properly targeted to the Golgi apparatus; strongly reduced secretion to the medium; localizes mainly to the ER compartment. Strongly impaired glycosylation of alpha-dystroglycan in muscles and brain." evidence="4 6 7 8 9">
    <original>P</original>
    <variation>L</variation>
    <location>
        <position position="448"/>
    </location>
</feature>
<feature type="sequence conflict" description="In Ref. 3; BAC37963." evidence="13" ref="3">
    <original>A</original>
    <variation>E</variation>
    <location>
        <position position="243"/>
    </location>
</feature>